<organism>
    <name type="scientific">Gallus gallus</name>
    <name type="common">Chicken</name>
    <dbReference type="NCBI Taxonomy" id="9031"/>
    <lineage>
        <taxon>Eukaryota</taxon>
        <taxon>Metazoa</taxon>
        <taxon>Chordata</taxon>
        <taxon>Craniata</taxon>
        <taxon>Vertebrata</taxon>
        <taxon>Euteleostomi</taxon>
        <taxon>Archelosauria</taxon>
        <taxon>Archosauria</taxon>
        <taxon>Dinosauria</taxon>
        <taxon>Saurischia</taxon>
        <taxon>Theropoda</taxon>
        <taxon>Coelurosauria</taxon>
        <taxon>Aves</taxon>
        <taxon>Neognathae</taxon>
        <taxon>Galloanserae</taxon>
        <taxon>Galliformes</taxon>
        <taxon>Phasianidae</taxon>
        <taxon>Phasianinae</taxon>
        <taxon>Gallus</taxon>
    </lineage>
</organism>
<evidence type="ECO:0000250" key="1">
    <source>
        <dbReference type="UniProtKB" id="Q9BRD0"/>
    </source>
</evidence>
<evidence type="ECO:0000255" key="2"/>
<evidence type="ECO:0000256" key="3">
    <source>
        <dbReference type="SAM" id="MobiDB-lite"/>
    </source>
</evidence>
<evidence type="ECO:0000305" key="4"/>
<proteinExistence type="evidence at transcript level"/>
<protein>
    <recommendedName>
        <fullName>BUD13 homolog</fullName>
    </recommendedName>
</protein>
<name>BUD13_CHICK</name>
<dbReference type="EMBL" id="AJ720794">
    <property type="protein sequence ID" value="CAG32453.1"/>
    <property type="molecule type" value="mRNA"/>
</dbReference>
<dbReference type="RefSeq" id="NP_001034408.1">
    <property type="nucleotide sequence ID" value="NM_001039319.2"/>
</dbReference>
<dbReference type="FunCoup" id="Q5ZIJ0">
    <property type="interactions" value="2188"/>
</dbReference>
<dbReference type="PaxDb" id="9031-ENSGALP00000011403"/>
<dbReference type="GeneID" id="428248"/>
<dbReference type="KEGG" id="gga:428248"/>
<dbReference type="CTD" id="84811"/>
<dbReference type="VEuPathDB" id="HostDB:geneid_428248"/>
<dbReference type="eggNOG" id="KOG2654">
    <property type="taxonomic scope" value="Eukaryota"/>
</dbReference>
<dbReference type="InParanoid" id="Q5ZIJ0"/>
<dbReference type="OrthoDB" id="6022at2759"/>
<dbReference type="PhylomeDB" id="Q5ZIJ0"/>
<dbReference type="PRO" id="PR:Q5ZIJ0"/>
<dbReference type="Proteomes" id="UP000000539">
    <property type="component" value="Unassembled WGS sequence"/>
</dbReference>
<dbReference type="GO" id="GO:0005634">
    <property type="term" value="C:nucleus"/>
    <property type="evidence" value="ECO:0000250"/>
    <property type="project" value="UniProtKB"/>
</dbReference>
<dbReference type="GO" id="GO:0071005">
    <property type="term" value="C:U2-type precatalytic spliceosome"/>
    <property type="evidence" value="ECO:0000250"/>
    <property type="project" value="UniProtKB"/>
</dbReference>
<dbReference type="GO" id="GO:0005684">
    <property type="term" value="C:U2-type spliceosomal complex"/>
    <property type="evidence" value="ECO:0000318"/>
    <property type="project" value="GO_Central"/>
</dbReference>
<dbReference type="GO" id="GO:0000398">
    <property type="term" value="P:mRNA splicing, via spliceosome"/>
    <property type="evidence" value="ECO:0000250"/>
    <property type="project" value="UniProtKB"/>
</dbReference>
<dbReference type="InterPro" id="IPR018609">
    <property type="entry name" value="Bud13"/>
</dbReference>
<dbReference type="InterPro" id="IPR051112">
    <property type="entry name" value="CWC26_splicing_factor"/>
</dbReference>
<dbReference type="PANTHER" id="PTHR31809">
    <property type="entry name" value="BUD13 HOMOLOG"/>
    <property type="match status" value="1"/>
</dbReference>
<dbReference type="PANTHER" id="PTHR31809:SF0">
    <property type="entry name" value="BUD13 HOMOLOG"/>
    <property type="match status" value="1"/>
</dbReference>
<dbReference type="Pfam" id="PF09736">
    <property type="entry name" value="Bud13"/>
    <property type="match status" value="1"/>
</dbReference>
<keyword id="KW-0175">Coiled coil</keyword>
<keyword id="KW-0507">mRNA processing</keyword>
<keyword id="KW-0508">mRNA splicing</keyword>
<keyword id="KW-0539">Nucleus</keyword>
<keyword id="KW-1185">Reference proteome</keyword>
<keyword id="KW-0747">Spliceosome</keyword>
<feature type="chain" id="PRO_0000287691" description="BUD13 homolog">
    <location>
        <begin position="1"/>
        <end position="559"/>
    </location>
</feature>
<feature type="region of interest" description="Disordered" evidence="3">
    <location>
        <begin position="1"/>
        <end position="44"/>
    </location>
</feature>
<feature type="region of interest" description="Disordered" evidence="3">
    <location>
        <begin position="89"/>
        <end position="456"/>
    </location>
</feature>
<feature type="region of interest" description="Disordered" evidence="3">
    <location>
        <begin position="474"/>
        <end position="517"/>
    </location>
</feature>
<feature type="coiled-coil region" evidence="2">
    <location>
        <begin position="373"/>
        <end position="431"/>
    </location>
</feature>
<feature type="compositionally biased region" description="Polar residues" evidence="3">
    <location>
        <begin position="245"/>
        <end position="256"/>
    </location>
</feature>
<feature type="compositionally biased region" description="Basic residues" evidence="3">
    <location>
        <begin position="274"/>
        <end position="287"/>
    </location>
</feature>
<feature type="compositionally biased region" description="Basic and acidic residues" evidence="3">
    <location>
        <begin position="344"/>
        <end position="355"/>
    </location>
</feature>
<feature type="compositionally biased region" description="Basic and acidic residues" evidence="3">
    <location>
        <begin position="374"/>
        <end position="434"/>
    </location>
</feature>
<feature type="compositionally biased region" description="Low complexity" evidence="3">
    <location>
        <begin position="436"/>
        <end position="449"/>
    </location>
</feature>
<feature type="compositionally biased region" description="Basic and acidic residues" evidence="3">
    <location>
        <begin position="474"/>
        <end position="483"/>
    </location>
</feature>
<feature type="compositionally biased region" description="Basic and acidic residues" evidence="3">
    <location>
        <begin position="496"/>
        <end position="505"/>
    </location>
</feature>
<accession>Q5ZIJ0</accession>
<reference key="1">
    <citation type="journal article" date="2005" name="Genome Biol.">
        <title>Full-length cDNAs from chicken bursal lymphocytes to facilitate gene function analysis.</title>
        <authorList>
            <person name="Caldwell R.B."/>
            <person name="Kierzek A.M."/>
            <person name="Arakawa H."/>
            <person name="Bezzubov Y."/>
            <person name="Zaim J."/>
            <person name="Fiedler P."/>
            <person name="Kutter S."/>
            <person name="Blagodatski A."/>
            <person name="Kostovska D."/>
            <person name="Koter M."/>
            <person name="Plachy J."/>
            <person name="Carninci P."/>
            <person name="Hayashizaki Y."/>
            <person name="Buerstedde J.-M."/>
        </authorList>
    </citation>
    <scope>NUCLEOTIDE SEQUENCE [LARGE SCALE MRNA]</scope>
    <source>
        <strain>CB</strain>
        <tissue>Bursa of Fabricius</tissue>
    </source>
</reference>
<gene>
    <name type="primary">BUD13</name>
    <name type="ORF">RCJMB04_25m15</name>
</gene>
<sequence length="559" mass="64409">MAAQGVSKAQYLQRYLSGPPAAQPRRRRKKKLPSGSGRAGMRIVDDDVGWSSIAAVPEKEEEEDEGDMPVVAEFIDERPDEVKLMEEFRTNSKWKLLGDRDEDSPSSDVSVPAKATTRQQRHDSPDNSPPRRVRHDSPDLSPPRQERNNSASLLPRKERQHGSPDLSPPRRKRHDSPDLSPPRRKRHDDSPDLSPPRRKRHDSPDLSPPRRKRHDSPDLSPPRRQRHDSPDPSPPRKKRHDSPDLSPQEQQTTPDLSLQRKKRYDSDPDSSPSLRKRARSPGHKKPSRTKDASPVKKLRRDSDSPPPRRGTQNASEADLSPQGKNHRALPSGKGQHGSKSPPDLSRHHYPDDKGSPKKGNMMSGVRAGLVSADVLRREQQELRKQERSSKHLEEESRHTETIFRDKSGRKRDLVQERLEQQQKDEAKSERDEQYARWGRGLAQGRQQQQNVEDAIKEMQKPLARYIDDEDLDRMLREQEREGDPMAEFIRKRKAKESKEKKEKPRYSGPAPPLNRFNIWPGHRWDGVDRSNGFEQQFFARMANKKAVQELAYKWSIEDM</sequence>
<comment type="function">
    <text evidence="1">Involved in pre-mRNA splicing as component of the activated spliceosome.</text>
</comment>
<comment type="subunit">
    <text evidence="1">Part of the activated spliceosome B/catalytic step 1 spliceosome, one of the forms of the spliceosome which has a well-formed active site but still cannot catalyze the branching reaction and is composed of at least 52 proteins, the U2, U5 and U6 snRNAs and the pre-mRNA. Component of the minor spliceosome, which splices U12-type introns (By similarity).</text>
</comment>
<comment type="subcellular location">
    <subcellularLocation>
        <location evidence="1">Nucleus</location>
    </subcellularLocation>
</comment>
<comment type="similarity">
    <text evidence="4">Belongs to the CWC26 family.</text>
</comment>